<keyword id="KW-0997">Cell inner membrane</keyword>
<keyword id="KW-1003">Cell membrane</keyword>
<keyword id="KW-0472">Membrane</keyword>
<keyword id="KW-0812">Transmembrane</keyword>
<keyword id="KW-1133">Transmembrane helix</keyword>
<proteinExistence type="inferred from homology"/>
<protein>
    <recommendedName>
        <fullName evidence="1">UPF0060 membrane protein ACIAD1364</fullName>
    </recommendedName>
</protein>
<accession>Q6FCI0</accession>
<gene>
    <name type="ordered locus">ACIAD1364</name>
</gene>
<sequence length="101" mass="11362">MTALAEILGCYFPYLILKEGKTHWLWLPAIISLAVFVWLLTLHPAASGRIYAAYGGIYIFTALMWLRFIDQVTLTRWDIWGGTVVLLGAALIILQPQGLLK</sequence>
<name>Y1364_ACIAD</name>
<reference key="1">
    <citation type="journal article" date="2004" name="Nucleic Acids Res.">
        <title>Unique features revealed by the genome sequence of Acinetobacter sp. ADP1, a versatile and naturally transformation competent bacterium.</title>
        <authorList>
            <person name="Barbe V."/>
            <person name="Vallenet D."/>
            <person name="Fonknechten N."/>
            <person name="Kreimeyer A."/>
            <person name="Oztas S."/>
            <person name="Labarre L."/>
            <person name="Cruveiller S."/>
            <person name="Robert C."/>
            <person name="Duprat S."/>
            <person name="Wincker P."/>
            <person name="Ornston L.N."/>
            <person name="Weissenbach J."/>
            <person name="Marliere P."/>
            <person name="Cohen G.N."/>
            <person name="Medigue C."/>
        </authorList>
    </citation>
    <scope>NUCLEOTIDE SEQUENCE [LARGE SCALE GENOMIC DNA]</scope>
    <source>
        <strain>ATCC 33305 / BD413 / ADP1</strain>
    </source>
</reference>
<comment type="subcellular location">
    <subcellularLocation>
        <location evidence="1">Cell inner membrane</location>
        <topology evidence="1">Multi-pass membrane protein</topology>
    </subcellularLocation>
</comment>
<comment type="similarity">
    <text evidence="1">Belongs to the UPF0060 family.</text>
</comment>
<feature type="chain" id="PRO_0000282201" description="UPF0060 membrane protein ACIAD1364">
    <location>
        <begin position="1"/>
        <end position="101"/>
    </location>
</feature>
<feature type="transmembrane region" description="Helical" evidence="1">
    <location>
        <begin position="24"/>
        <end position="44"/>
    </location>
</feature>
<feature type="transmembrane region" description="Helical" evidence="1">
    <location>
        <begin position="50"/>
        <end position="70"/>
    </location>
</feature>
<feature type="transmembrane region" description="Helical" evidence="1">
    <location>
        <begin position="79"/>
        <end position="99"/>
    </location>
</feature>
<dbReference type="EMBL" id="CR543861">
    <property type="protein sequence ID" value="CAG68231.1"/>
    <property type="molecule type" value="Genomic_DNA"/>
</dbReference>
<dbReference type="SMR" id="Q6FCI0"/>
<dbReference type="STRING" id="202950.GCA_001485005_01122"/>
<dbReference type="KEGG" id="aci:ACIAD1364"/>
<dbReference type="eggNOG" id="COG1742">
    <property type="taxonomic scope" value="Bacteria"/>
</dbReference>
<dbReference type="HOGENOM" id="CLU_117653_2_0_6"/>
<dbReference type="Proteomes" id="UP000000430">
    <property type="component" value="Chromosome"/>
</dbReference>
<dbReference type="GO" id="GO:0005886">
    <property type="term" value="C:plasma membrane"/>
    <property type="evidence" value="ECO:0007669"/>
    <property type="project" value="UniProtKB-SubCell"/>
</dbReference>
<dbReference type="HAMAP" id="MF_00010">
    <property type="entry name" value="UPF0060"/>
    <property type="match status" value="1"/>
</dbReference>
<dbReference type="InterPro" id="IPR003844">
    <property type="entry name" value="UPF0060"/>
</dbReference>
<dbReference type="NCBIfam" id="NF002586">
    <property type="entry name" value="PRK02237.1"/>
    <property type="match status" value="1"/>
</dbReference>
<dbReference type="PANTHER" id="PTHR36116">
    <property type="entry name" value="UPF0060 MEMBRANE PROTEIN YNFA"/>
    <property type="match status" value="1"/>
</dbReference>
<dbReference type="PANTHER" id="PTHR36116:SF1">
    <property type="entry name" value="UPF0060 MEMBRANE PROTEIN YNFA"/>
    <property type="match status" value="1"/>
</dbReference>
<dbReference type="Pfam" id="PF02694">
    <property type="entry name" value="UPF0060"/>
    <property type="match status" value="1"/>
</dbReference>
<organism>
    <name type="scientific">Acinetobacter baylyi (strain ATCC 33305 / BD413 / ADP1)</name>
    <dbReference type="NCBI Taxonomy" id="62977"/>
    <lineage>
        <taxon>Bacteria</taxon>
        <taxon>Pseudomonadati</taxon>
        <taxon>Pseudomonadota</taxon>
        <taxon>Gammaproteobacteria</taxon>
        <taxon>Moraxellales</taxon>
        <taxon>Moraxellaceae</taxon>
        <taxon>Acinetobacter</taxon>
    </lineage>
</organism>
<evidence type="ECO:0000255" key="1">
    <source>
        <dbReference type="HAMAP-Rule" id="MF_00010"/>
    </source>
</evidence>